<comment type="function">
    <text evidence="1">One of the primary rRNA binding proteins, it binds directly to 16S rRNA central domain where it helps coordinate assembly of the platform of the 30S subunit.</text>
</comment>
<comment type="subunit">
    <text evidence="1">Part of the 30S ribosomal subunit. Contacts proteins S5 and S12.</text>
</comment>
<comment type="similarity">
    <text evidence="1">Belongs to the universal ribosomal protein uS8 family.</text>
</comment>
<reference key="1">
    <citation type="journal article" date="2008" name="Proc. Natl. Acad. Sci. U.S.A.">
        <title>The genome sequence of Bifidobacterium longum subsp. infantis reveals adaptations for milk utilization within the infant microbiome.</title>
        <authorList>
            <person name="Sela D.A."/>
            <person name="Chapman J."/>
            <person name="Adeuya A."/>
            <person name="Kim J.H."/>
            <person name="Chen F."/>
            <person name="Whitehead T.R."/>
            <person name="Lapidus A."/>
            <person name="Rokhsar D.S."/>
            <person name="Lebrilla C.B."/>
            <person name="German J.B."/>
            <person name="Price N.P."/>
            <person name="Richardson P.M."/>
            <person name="Mills D.A."/>
        </authorList>
    </citation>
    <scope>NUCLEOTIDE SEQUENCE [LARGE SCALE GENOMIC DNA]</scope>
    <source>
        <strain>ATCC 15697 / DSM 20088 / JCM 1222 / NCTC 11817 / S12</strain>
    </source>
</reference>
<reference key="2">
    <citation type="journal article" date="2011" name="Nature">
        <title>Bifidobacteria can protect from enteropathogenic infection through production of acetate.</title>
        <authorList>
            <person name="Fukuda S."/>
            <person name="Toh H."/>
            <person name="Hase K."/>
            <person name="Oshima K."/>
            <person name="Nakanishi Y."/>
            <person name="Yoshimura K."/>
            <person name="Tobe T."/>
            <person name="Clarke J.M."/>
            <person name="Topping D.L."/>
            <person name="Suzuki T."/>
            <person name="Taylor T.D."/>
            <person name="Itoh K."/>
            <person name="Kikuchi J."/>
            <person name="Morita H."/>
            <person name="Hattori M."/>
            <person name="Ohno H."/>
        </authorList>
    </citation>
    <scope>NUCLEOTIDE SEQUENCE [LARGE SCALE GENOMIC DNA]</scope>
    <source>
        <strain>ATCC 15697 / DSM 20088 / JCM 1222 / NCTC 11817 / S12</strain>
    </source>
</reference>
<keyword id="KW-0687">Ribonucleoprotein</keyword>
<keyword id="KW-0689">Ribosomal protein</keyword>
<keyword id="KW-0694">RNA-binding</keyword>
<keyword id="KW-0699">rRNA-binding</keyword>
<proteinExistence type="inferred from homology"/>
<protein>
    <recommendedName>
        <fullName evidence="1">Small ribosomal subunit protein uS8</fullName>
    </recommendedName>
    <alternativeName>
        <fullName evidence="2">30S ribosomal protein S8</fullName>
    </alternativeName>
</protein>
<sequence length="132" mass="14444">MTMTDPIADMLTRLRNASAAKHETVDMPYSKFKANIAEILKREGYIKDFTAKEAKVGQTLEVTLKYGPNGERSIQGIKRISKPGLRRYAKSDSLPMPLGGLGIAIISTSSGLLTQKECLDRGIGGEIVAFVW</sequence>
<accession>B7GNC6</accession>
<accession>E8MN70</accession>
<feature type="chain" id="PRO_1000165309" description="Small ribosomal subunit protein uS8">
    <location>
        <begin position="1"/>
        <end position="132"/>
    </location>
</feature>
<name>RS8_BIFLS</name>
<organism>
    <name type="scientific">Bifidobacterium longum subsp. infantis (strain ATCC 15697 / DSM 20088 / JCM 1222 / NCTC 11817 / S12)</name>
    <dbReference type="NCBI Taxonomy" id="391904"/>
    <lineage>
        <taxon>Bacteria</taxon>
        <taxon>Bacillati</taxon>
        <taxon>Actinomycetota</taxon>
        <taxon>Actinomycetes</taxon>
        <taxon>Bifidobacteriales</taxon>
        <taxon>Bifidobacteriaceae</taxon>
        <taxon>Bifidobacterium</taxon>
    </lineage>
</organism>
<evidence type="ECO:0000255" key="1">
    <source>
        <dbReference type="HAMAP-Rule" id="MF_01302"/>
    </source>
</evidence>
<evidence type="ECO:0000305" key="2"/>
<gene>
    <name evidence="1" type="primary">rpsH</name>
    <name type="ordered locus">Blon_2223</name>
    <name type="ordered locus">BLIJ_2296</name>
</gene>
<dbReference type="EMBL" id="CP001095">
    <property type="protein sequence ID" value="ACJ53282.1"/>
    <property type="molecule type" value="Genomic_DNA"/>
</dbReference>
<dbReference type="EMBL" id="AP010889">
    <property type="protein sequence ID" value="BAJ69873.1"/>
    <property type="molecule type" value="Genomic_DNA"/>
</dbReference>
<dbReference type="RefSeq" id="WP_003829896.1">
    <property type="nucleotide sequence ID" value="NZ_JDTT01000039.1"/>
</dbReference>
<dbReference type="SMR" id="B7GNC6"/>
<dbReference type="GeneID" id="69578883"/>
<dbReference type="KEGG" id="bln:Blon_2223"/>
<dbReference type="KEGG" id="blon:BLIJ_2296"/>
<dbReference type="PATRIC" id="fig|391904.8.peg.2298"/>
<dbReference type="HOGENOM" id="CLU_098428_0_1_11"/>
<dbReference type="Proteomes" id="UP000001360">
    <property type="component" value="Chromosome"/>
</dbReference>
<dbReference type="GO" id="GO:1990904">
    <property type="term" value="C:ribonucleoprotein complex"/>
    <property type="evidence" value="ECO:0007669"/>
    <property type="project" value="UniProtKB-KW"/>
</dbReference>
<dbReference type="GO" id="GO:0005840">
    <property type="term" value="C:ribosome"/>
    <property type="evidence" value="ECO:0007669"/>
    <property type="project" value="UniProtKB-KW"/>
</dbReference>
<dbReference type="GO" id="GO:0019843">
    <property type="term" value="F:rRNA binding"/>
    <property type="evidence" value="ECO:0007669"/>
    <property type="project" value="UniProtKB-UniRule"/>
</dbReference>
<dbReference type="GO" id="GO:0003735">
    <property type="term" value="F:structural constituent of ribosome"/>
    <property type="evidence" value="ECO:0007669"/>
    <property type="project" value="InterPro"/>
</dbReference>
<dbReference type="GO" id="GO:0006412">
    <property type="term" value="P:translation"/>
    <property type="evidence" value="ECO:0007669"/>
    <property type="project" value="UniProtKB-UniRule"/>
</dbReference>
<dbReference type="FunFam" id="3.30.1370.30:FF:000002">
    <property type="entry name" value="30S ribosomal protein S8"/>
    <property type="match status" value="1"/>
</dbReference>
<dbReference type="FunFam" id="3.30.1490.10:FF:000001">
    <property type="entry name" value="30S ribosomal protein S8"/>
    <property type="match status" value="1"/>
</dbReference>
<dbReference type="Gene3D" id="3.30.1370.30">
    <property type="match status" value="1"/>
</dbReference>
<dbReference type="Gene3D" id="3.30.1490.10">
    <property type="match status" value="1"/>
</dbReference>
<dbReference type="HAMAP" id="MF_01302_B">
    <property type="entry name" value="Ribosomal_uS8_B"/>
    <property type="match status" value="1"/>
</dbReference>
<dbReference type="InterPro" id="IPR000630">
    <property type="entry name" value="Ribosomal_uS8"/>
</dbReference>
<dbReference type="InterPro" id="IPR035987">
    <property type="entry name" value="Ribosomal_uS8_sf"/>
</dbReference>
<dbReference type="NCBIfam" id="NF001109">
    <property type="entry name" value="PRK00136.1"/>
    <property type="match status" value="1"/>
</dbReference>
<dbReference type="PANTHER" id="PTHR11758">
    <property type="entry name" value="40S RIBOSOMAL PROTEIN S15A"/>
    <property type="match status" value="1"/>
</dbReference>
<dbReference type="Pfam" id="PF00410">
    <property type="entry name" value="Ribosomal_S8"/>
    <property type="match status" value="1"/>
</dbReference>
<dbReference type="SUPFAM" id="SSF56047">
    <property type="entry name" value="Ribosomal protein S8"/>
    <property type="match status" value="1"/>
</dbReference>